<protein>
    <recommendedName>
        <fullName>PITH domain-containing protein ZK353.9</fullName>
    </recommendedName>
</protein>
<comment type="similarity">
    <text evidence="2">Belongs to the PITHD1 family.</text>
</comment>
<keyword id="KW-1185">Reference proteome</keyword>
<reference key="1">
    <citation type="journal article" date="1994" name="Nature">
        <title>2.2 Mb of contiguous nucleotide sequence from chromosome III of C. elegans.</title>
        <authorList>
            <person name="Wilson R."/>
            <person name="Ainscough R."/>
            <person name="Anderson K."/>
            <person name="Baynes C."/>
            <person name="Berks M."/>
            <person name="Bonfield J."/>
            <person name="Burton J."/>
            <person name="Connell M."/>
            <person name="Copsey T."/>
            <person name="Cooper J."/>
            <person name="Coulson A."/>
            <person name="Craxton M."/>
            <person name="Dear S."/>
            <person name="Du Z."/>
            <person name="Durbin R."/>
            <person name="Favello A."/>
            <person name="Fraser A."/>
            <person name="Fulton L."/>
            <person name="Gardner A."/>
            <person name="Green P."/>
            <person name="Hawkins T."/>
            <person name="Hillier L."/>
            <person name="Jier M."/>
            <person name="Johnston L."/>
            <person name="Jones M."/>
            <person name="Kershaw J."/>
            <person name="Kirsten J."/>
            <person name="Laisster N."/>
            <person name="Latreille P."/>
            <person name="Lightning J."/>
            <person name="Lloyd C."/>
            <person name="Mortimore B."/>
            <person name="O'Callaghan M."/>
            <person name="Parsons J."/>
            <person name="Percy C."/>
            <person name="Rifken L."/>
            <person name="Roopra A."/>
            <person name="Saunders D."/>
            <person name="Shownkeen R."/>
            <person name="Sims M."/>
            <person name="Smaldon N."/>
            <person name="Smith A."/>
            <person name="Smith M."/>
            <person name="Sonnhammer E."/>
            <person name="Staden R."/>
            <person name="Sulston J."/>
            <person name="Thierry-Mieg J."/>
            <person name="Thomas K."/>
            <person name="Vaudin M."/>
            <person name="Vaughan K."/>
            <person name="Waterston R."/>
            <person name="Watson A."/>
            <person name="Weinstock L."/>
            <person name="Wilkinson-Sproat J."/>
            <person name="Wohldman P."/>
        </authorList>
    </citation>
    <scope>NUCLEOTIDE SEQUENCE [LARGE SCALE GENOMIC DNA]</scope>
    <source>
        <strain>Bristol N2</strain>
    </source>
</reference>
<reference key="2">
    <citation type="journal article" date="1998" name="Science">
        <title>Genome sequence of the nematode C. elegans: a platform for investigating biology.</title>
        <authorList>
            <consortium name="The C. elegans sequencing consortium"/>
        </authorList>
    </citation>
    <scope>NUCLEOTIDE SEQUENCE [LARGE SCALE GENOMIC DNA]</scope>
    <source>
        <strain>Bristol N2</strain>
    </source>
</reference>
<dbReference type="EMBL" id="FO081668">
    <property type="protein sequence ID" value="CCD73208.1"/>
    <property type="molecule type" value="Genomic_DNA"/>
</dbReference>
<dbReference type="RefSeq" id="NP_498859.1">
    <property type="nucleotide sequence ID" value="NM_066458.7"/>
</dbReference>
<dbReference type="SMR" id="Q95ZI6"/>
<dbReference type="BioGRID" id="55829">
    <property type="interactions" value="5"/>
</dbReference>
<dbReference type="FunCoup" id="Q95ZI6">
    <property type="interactions" value="2926"/>
</dbReference>
<dbReference type="STRING" id="6239.ZK353.9.1"/>
<dbReference type="PaxDb" id="6239-ZK353.9"/>
<dbReference type="PeptideAtlas" id="Q95ZI6"/>
<dbReference type="EnsemblMetazoa" id="ZK353.9.1">
    <property type="protein sequence ID" value="ZK353.9.1"/>
    <property type="gene ID" value="WBGene00022704"/>
</dbReference>
<dbReference type="GeneID" id="191290"/>
<dbReference type="KEGG" id="cel:CELE_ZK353.9"/>
<dbReference type="UCSC" id="ZK353.9">
    <property type="organism name" value="c. elegans"/>
</dbReference>
<dbReference type="AGR" id="WB:WBGene00022704"/>
<dbReference type="CTD" id="191290"/>
<dbReference type="WormBase" id="ZK353.9">
    <property type="protein sequence ID" value="CE25685"/>
    <property type="gene ID" value="WBGene00022704"/>
</dbReference>
<dbReference type="eggNOG" id="KOG1730">
    <property type="taxonomic scope" value="Eukaryota"/>
</dbReference>
<dbReference type="GeneTree" id="ENSGT00490000043398"/>
<dbReference type="HOGENOM" id="CLU_072377_2_0_1"/>
<dbReference type="InParanoid" id="Q95ZI6"/>
<dbReference type="OMA" id="RLVFKPW"/>
<dbReference type="OrthoDB" id="2635at2759"/>
<dbReference type="PhylomeDB" id="Q95ZI6"/>
<dbReference type="PRO" id="PR:Q95ZI6"/>
<dbReference type="Proteomes" id="UP000001940">
    <property type="component" value="Chromosome III"/>
</dbReference>
<dbReference type="Bgee" id="WBGene00022704">
    <property type="expression patterns" value="Expressed in germ line (C elegans) and 4 other cell types or tissues"/>
</dbReference>
<dbReference type="GO" id="GO:0005737">
    <property type="term" value="C:cytoplasm"/>
    <property type="evidence" value="ECO:0007669"/>
    <property type="project" value="UniProtKB-ARBA"/>
</dbReference>
<dbReference type="GO" id="GO:0005634">
    <property type="term" value="C:nucleus"/>
    <property type="evidence" value="ECO:0000318"/>
    <property type="project" value="GO_Central"/>
</dbReference>
<dbReference type="FunFam" id="2.60.120.470:FF:000009">
    <property type="entry name" value="PITH domain-containing protein ZK353.9"/>
    <property type="match status" value="1"/>
</dbReference>
<dbReference type="Gene3D" id="2.60.120.470">
    <property type="entry name" value="PITH domain"/>
    <property type="match status" value="1"/>
</dbReference>
<dbReference type="InterPro" id="IPR008979">
    <property type="entry name" value="Galactose-bd-like_sf"/>
</dbReference>
<dbReference type="InterPro" id="IPR045099">
    <property type="entry name" value="PITH1-like"/>
</dbReference>
<dbReference type="InterPro" id="IPR010400">
    <property type="entry name" value="PITH_dom"/>
</dbReference>
<dbReference type="InterPro" id="IPR037047">
    <property type="entry name" value="PITH_dom_sf"/>
</dbReference>
<dbReference type="PANTHER" id="PTHR12175">
    <property type="entry name" value="AD039 HT014 THIOREDOXIN FAMILY TRP26"/>
    <property type="match status" value="1"/>
</dbReference>
<dbReference type="PANTHER" id="PTHR12175:SF1">
    <property type="entry name" value="PITH DOMAIN-CONTAINING PROTEIN 1"/>
    <property type="match status" value="1"/>
</dbReference>
<dbReference type="Pfam" id="PF06201">
    <property type="entry name" value="PITH"/>
    <property type="match status" value="1"/>
</dbReference>
<dbReference type="SUPFAM" id="SSF49785">
    <property type="entry name" value="Galactose-binding domain-like"/>
    <property type="match status" value="1"/>
</dbReference>
<dbReference type="PROSITE" id="PS51532">
    <property type="entry name" value="PITH"/>
    <property type="match status" value="1"/>
</dbReference>
<evidence type="ECO:0000255" key="1">
    <source>
        <dbReference type="PROSITE-ProRule" id="PRU00864"/>
    </source>
</evidence>
<evidence type="ECO:0000305" key="2"/>
<sequence length="208" mass="23653">MCSHGHSHNCAAEHIPEVPGDDVYRYDMVSYIDMEKVTTLNESVDGAGKKVFKVMEKRDDRLEYVESDCDHELLFNIPFTGHVRLTGLSIIGDEDGSHPAKIRLFKDREAMSFDDCSIEADQEIDLKQDPQGLVDYPLKASKFGNIHNLSILVDANFGEDETKIYYIGLRGEFQHEFRQRIAIATYESRAQLKDHKNEIPDAVAKGLF</sequence>
<feature type="chain" id="PRO_0000065514" description="PITH domain-containing protein ZK353.9">
    <location>
        <begin position="1"/>
        <end position="208"/>
    </location>
</feature>
<feature type="domain" description="PITH" evidence="1">
    <location>
        <begin position="17"/>
        <end position="189"/>
    </location>
</feature>
<proteinExistence type="inferred from homology"/>
<accession>Q95ZI6</accession>
<name>PITH1_CAEEL</name>
<gene>
    <name type="ORF">ZK353.9</name>
</gene>
<organism>
    <name type="scientific">Caenorhabditis elegans</name>
    <dbReference type="NCBI Taxonomy" id="6239"/>
    <lineage>
        <taxon>Eukaryota</taxon>
        <taxon>Metazoa</taxon>
        <taxon>Ecdysozoa</taxon>
        <taxon>Nematoda</taxon>
        <taxon>Chromadorea</taxon>
        <taxon>Rhabditida</taxon>
        <taxon>Rhabditina</taxon>
        <taxon>Rhabditomorpha</taxon>
        <taxon>Rhabditoidea</taxon>
        <taxon>Rhabditidae</taxon>
        <taxon>Peloderinae</taxon>
        <taxon>Caenorhabditis</taxon>
    </lineage>
</organism>